<gene>
    <name evidence="1" type="primary">lipA</name>
    <name type="ordered locus">Chy400_3075</name>
</gene>
<sequence>MAELIPLNEVGVAQPASGAVNRPRRPEWLKARAPGGVNYHDVLRLMREKNLHTVCEEARCPNIGECWNHRTATFLLLGDICTRGCRYCAIGKGKPKPIDENEPERVAESVAHLKLKFAVLTSVNRDDVPDGGAHIFARTIELIRQKVPDCKVEVLIPDFDGNWDALATVLAAEPDVLNHNIETVPRLFRRFRPRAKFEQSIELLARARAARPKLVTKSGMMVGAGETNEEVYEVIDRLRSVDVNVLTIGQYLAPDASYWPVHRYVTPAEFAEFRSYALARGFTHVESGPLVRSSYNAHLHVGAAQH</sequence>
<organism>
    <name type="scientific">Chloroflexus aurantiacus (strain ATCC 29364 / DSM 637 / Y-400-fl)</name>
    <dbReference type="NCBI Taxonomy" id="480224"/>
    <lineage>
        <taxon>Bacteria</taxon>
        <taxon>Bacillati</taxon>
        <taxon>Chloroflexota</taxon>
        <taxon>Chloroflexia</taxon>
        <taxon>Chloroflexales</taxon>
        <taxon>Chloroflexineae</taxon>
        <taxon>Chloroflexaceae</taxon>
        <taxon>Chloroflexus</taxon>
    </lineage>
</organism>
<dbReference type="EC" id="2.8.1.8" evidence="1"/>
<dbReference type="EMBL" id="CP001364">
    <property type="protein sequence ID" value="ACM54454.1"/>
    <property type="molecule type" value="Genomic_DNA"/>
</dbReference>
<dbReference type="SMR" id="B9LM70"/>
<dbReference type="KEGG" id="chl:Chy400_3075"/>
<dbReference type="HOGENOM" id="CLU_033144_2_1_0"/>
<dbReference type="OrthoDB" id="9787898at2"/>
<dbReference type="UniPathway" id="UPA00538">
    <property type="reaction ID" value="UER00593"/>
</dbReference>
<dbReference type="GO" id="GO:0005737">
    <property type="term" value="C:cytoplasm"/>
    <property type="evidence" value="ECO:0007669"/>
    <property type="project" value="UniProtKB-SubCell"/>
</dbReference>
<dbReference type="GO" id="GO:0051539">
    <property type="term" value="F:4 iron, 4 sulfur cluster binding"/>
    <property type="evidence" value="ECO:0007669"/>
    <property type="project" value="UniProtKB-UniRule"/>
</dbReference>
<dbReference type="GO" id="GO:0016992">
    <property type="term" value="F:lipoate synthase activity"/>
    <property type="evidence" value="ECO:0007669"/>
    <property type="project" value="UniProtKB-UniRule"/>
</dbReference>
<dbReference type="GO" id="GO:0046872">
    <property type="term" value="F:metal ion binding"/>
    <property type="evidence" value="ECO:0007669"/>
    <property type="project" value="UniProtKB-KW"/>
</dbReference>
<dbReference type="FunFam" id="3.20.20.70:FF:000040">
    <property type="entry name" value="Lipoyl synthase"/>
    <property type="match status" value="1"/>
</dbReference>
<dbReference type="Gene3D" id="3.20.20.70">
    <property type="entry name" value="Aldolase class I"/>
    <property type="match status" value="1"/>
</dbReference>
<dbReference type="HAMAP" id="MF_00206">
    <property type="entry name" value="Lipoyl_synth"/>
    <property type="match status" value="1"/>
</dbReference>
<dbReference type="InterPro" id="IPR013785">
    <property type="entry name" value="Aldolase_TIM"/>
</dbReference>
<dbReference type="InterPro" id="IPR006638">
    <property type="entry name" value="Elp3/MiaA/NifB-like_rSAM"/>
</dbReference>
<dbReference type="InterPro" id="IPR031691">
    <property type="entry name" value="LIAS_N"/>
</dbReference>
<dbReference type="InterPro" id="IPR003698">
    <property type="entry name" value="Lipoyl_synth"/>
</dbReference>
<dbReference type="InterPro" id="IPR007197">
    <property type="entry name" value="rSAM"/>
</dbReference>
<dbReference type="NCBIfam" id="TIGR00510">
    <property type="entry name" value="lipA"/>
    <property type="match status" value="1"/>
</dbReference>
<dbReference type="NCBIfam" id="NF004019">
    <property type="entry name" value="PRK05481.1"/>
    <property type="match status" value="1"/>
</dbReference>
<dbReference type="NCBIfam" id="NF009544">
    <property type="entry name" value="PRK12928.1"/>
    <property type="match status" value="1"/>
</dbReference>
<dbReference type="PANTHER" id="PTHR10949">
    <property type="entry name" value="LIPOYL SYNTHASE"/>
    <property type="match status" value="1"/>
</dbReference>
<dbReference type="PANTHER" id="PTHR10949:SF0">
    <property type="entry name" value="LIPOYL SYNTHASE, MITOCHONDRIAL"/>
    <property type="match status" value="1"/>
</dbReference>
<dbReference type="Pfam" id="PF16881">
    <property type="entry name" value="LIAS_N"/>
    <property type="match status" value="1"/>
</dbReference>
<dbReference type="Pfam" id="PF04055">
    <property type="entry name" value="Radical_SAM"/>
    <property type="match status" value="1"/>
</dbReference>
<dbReference type="PIRSF" id="PIRSF005963">
    <property type="entry name" value="Lipoyl_synth"/>
    <property type="match status" value="1"/>
</dbReference>
<dbReference type="SFLD" id="SFLDF00271">
    <property type="entry name" value="lipoyl_synthase"/>
    <property type="match status" value="1"/>
</dbReference>
<dbReference type="SFLD" id="SFLDS00029">
    <property type="entry name" value="Radical_SAM"/>
    <property type="match status" value="1"/>
</dbReference>
<dbReference type="SMART" id="SM00729">
    <property type="entry name" value="Elp3"/>
    <property type="match status" value="1"/>
</dbReference>
<dbReference type="SUPFAM" id="SSF102114">
    <property type="entry name" value="Radical SAM enzymes"/>
    <property type="match status" value="1"/>
</dbReference>
<dbReference type="PROSITE" id="PS51918">
    <property type="entry name" value="RADICAL_SAM"/>
    <property type="match status" value="1"/>
</dbReference>
<accession>B9LM70</accession>
<protein>
    <recommendedName>
        <fullName evidence="1">Lipoyl synthase</fullName>
        <ecNumber evidence="1">2.8.1.8</ecNumber>
    </recommendedName>
    <alternativeName>
        <fullName evidence="1">Lip-syn</fullName>
        <shortName evidence="1">LS</shortName>
    </alternativeName>
    <alternativeName>
        <fullName evidence="1">Lipoate synthase</fullName>
    </alternativeName>
    <alternativeName>
        <fullName evidence="1">Lipoic acid synthase</fullName>
    </alternativeName>
    <alternativeName>
        <fullName evidence="1">Sulfur insertion protein LipA</fullName>
    </alternativeName>
</protein>
<keyword id="KW-0004">4Fe-4S</keyword>
<keyword id="KW-0963">Cytoplasm</keyword>
<keyword id="KW-0408">Iron</keyword>
<keyword id="KW-0411">Iron-sulfur</keyword>
<keyword id="KW-0479">Metal-binding</keyword>
<keyword id="KW-0949">S-adenosyl-L-methionine</keyword>
<keyword id="KW-0808">Transferase</keyword>
<proteinExistence type="inferred from homology"/>
<reference key="1">
    <citation type="submission" date="2009-01" db="EMBL/GenBank/DDBJ databases">
        <title>Complete sequence of Chloroflexus sp. Y-400-fl.</title>
        <authorList>
            <consortium name="US DOE Joint Genome Institute"/>
            <person name="Lucas S."/>
            <person name="Copeland A."/>
            <person name="Lapidus A."/>
            <person name="Glavina del Rio T."/>
            <person name="Dalin E."/>
            <person name="Tice H."/>
            <person name="Bruce D."/>
            <person name="Goodwin L."/>
            <person name="Pitluck S."/>
            <person name="Sims D."/>
            <person name="Kiss H."/>
            <person name="Brettin T."/>
            <person name="Detter J.C."/>
            <person name="Han C."/>
            <person name="Larimer F."/>
            <person name="Land M."/>
            <person name="Hauser L."/>
            <person name="Kyrpides N."/>
            <person name="Ovchinnikova G."/>
            <person name="Bryant D.A."/>
            <person name="Richardson P."/>
        </authorList>
    </citation>
    <scope>NUCLEOTIDE SEQUENCE [LARGE SCALE GENOMIC DNA]</scope>
    <source>
        <strain>ATCC 29364 / DSM 637 / Y-400-fl</strain>
    </source>
</reference>
<name>LIPA_CHLSY</name>
<comment type="function">
    <text evidence="1">Catalyzes the radical-mediated insertion of two sulfur atoms into the C-6 and C-8 positions of the octanoyl moiety bound to the lipoyl domains of lipoate-dependent enzymes, thereby converting the octanoylated domains into lipoylated derivatives.</text>
</comment>
<comment type="catalytic activity">
    <reaction evidence="1">
        <text>[[Fe-S] cluster scaffold protein carrying a second [4Fe-4S](2+) cluster] + N(6)-octanoyl-L-lysyl-[protein] + 2 oxidized [2Fe-2S]-[ferredoxin] + 2 S-adenosyl-L-methionine + 4 H(+) = [[Fe-S] cluster scaffold protein] + N(6)-[(R)-dihydrolipoyl]-L-lysyl-[protein] + 4 Fe(3+) + 2 hydrogen sulfide + 2 5'-deoxyadenosine + 2 L-methionine + 2 reduced [2Fe-2S]-[ferredoxin]</text>
        <dbReference type="Rhea" id="RHEA:16585"/>
        <dbReference type="Rhea" id="RHEA-COMP:9928"/>
        <dbReference type="Rhea" id="RHEA-COMP:10000"/>
        <dbReference type="Rhea" id="RHEA-COMP:10001"/>
        <dbReference type="Rhea" id="RHEA-COMP:10475"/>
        <dbReference type="Rhea" id="RHEA-COMP:14568"/>
        <dbReference type="Rhea" id="RHEA-COMP:14569"/>
        <dbReference type="ChEBI" id="CHEBI:15378"/>
        <dbReference type="ChEBI" id="CHEBI:17319"/>
        <dbReference type="ChEBI" id="CHEBI:29034"/>
        <dbReference type="ChEBI" id="CHEBI:29919"/>
        <dbReference type="ChEBI" id="CHEBI:33722"/>
        <dbReference type="ChEBI" id="CHEBI:33737"/>
        <dbReference type="ChEBI" id="CHEBI:33738"/>
        <dbReference type="ChEBI" id="CHEBI:57844"/>
        <dbReference type="ChEBI" id="CHEBI:59789"/>
        <dbReference type="ChEBI" id="CHEBI:78809"/>
        <dbReference type="ChEBI" id="CHEBI:83100"/>
        <dbReference type="EC" id="2.8.1.8"/>
    </reaction>
</comment>
<comment type="cofactor">
    <cofactor evidence="1">
        <name>[4Fe-4S] cluster</name>
        <dbReference type="ChEBI" id="CHEBI:49883"/>
    </cofactor>
    <text evidence="1">Binds 2 [4Fe-4S] clusters per subunit. One cluster is coordinated with 3 cysteines and an exchangeable S-adenosyl-L-methionine.</text>
</comment>
<comment type="pathway">
    <text evidence="1">Protein modification; protein lipoylation via endogenous pathway; protein N(6)-(lipoyl)lysine from octanoyl-[acyl-carrier-protein]: step 2/2.</text>
</comment>
<comment type="subcellular location">
    <subcellularLocation>
        <location evidence="1">Cytoplasm</location>
    </subcellularLocation>
</comment>
<comment type="similarity">
    <text evidence="1">Belongs to the radical SAM superfamily. Lipoyl synthase family.</text>
</comment>
<evidence type="ECO:0000255" key="1">
    <source>
        <dbReference type="HAMAP-Rule" id="MF_00206"/>
    </source>
</evidence>
<evidence type="ECO:0000255" key="2">
    <source>
        <dbReference type="PROSITE-ProRule" id="PRU01266"/>
    </source>
</evidence>
<feature type="chain" id="PRO_1000124627" description="Lipoyl synthase">
    <location>
        <begin position="1"/>
        <end position="306"/>
    </location>
</feature>
<feature type="domain" description="Radical SAM core" evidence="2">
    <location>
        <begin position="67"/>
        <end position="283"/>
    </location>
</feature>
<feature type="binding site" evidence="1">
    <location>
        <position position="55"/>
    </location>
    <ligand>
        <name>[4Fe-4S] cluster</name>
        <dbReference type="ChEBI" id="CHEBI:49883"/>
        <label>1</label>
    </ligand>
</feature>
<feature type="binding site" evidence="1">
    <location>
        <position position="60"/>
    </location>
    <ligand>
        <name>[4Fe-4S] cluster</name>
        <dbReference type="ChEBI" id="CHEBI:49883"/>
        <label>1</label>
    </ligand>
</feature>
<feature type="binding site" evidence="1">
    <location>
        <position position="66"/>
    </location>
    <ligand>
        <name>[4Fe-4S] cluster</name>
        <dbReference type="ChEBI" id="CHEBI:49883"/>
        <label>1</label>
    </ligand>
</feature>
<feature type="binding site" evidence="1">
    <location>
        <position position="81"/>
    </location>
    <ligand>
        <name>[4Fe-4S] cluster</name>
        <dbReference type="ChEBI" id="CHEBI:49883"/>
        <label>2</label>
        <note>4Fe-4S-S-AdoMet</note>
    </ligand>
</feature>
<feature type="binding site" evidence="1">
    <location>
        <position position="85"/>
    </location>
    <ligand>
        <name>[4Fe-4S] cluster</name>
        <dbReference type="ChEBI" id="CHEBI:49883"/>
        <label>2</label>
        <note>4Fe-4S-S-AdoMet</note>
    </ligand>
</feature>
<feature type="binding site" evidence="1">
    <location>
        <position position="88"/>
    </location>
    <ligand>
        <name>[4Fe-4S] cluster</name>
        <dbReference type="ChEBI" id="CHEBI:49883"/>
        <label>2</label>
        <note>4Fe-4S-S-AdoMet</note>
    </ligand>
</feature>
<feature type="binding site" evidence="1">
    <location>
        <position position="294"/>
    </location>
    <ligand>
        <name>[4Fe-4S] cluster</name>
        <dbReference type="ChEBI" id="CHEBI:49883"/>
        <label>1</label>
    </ligand>
</feature>